<gene>
    <name type="primary">PAL</name>
</gene>
<name>PALY_WHEAT</name>
<protein>
    <recommendedName>
        <fullName>Phenylalanine ammonia-lyase</fullName>
        <ecNumber evidence="2">4.3.1.24</ecNumber>
    </recommendedName>
</protein>
<organism>
    <name type="scientific">Triticum aestivum</name>
    <name type="common">Wheat</name>
    <dbReference type="NCBI Taxonomy" id="4565"/>
    <lineage>
        <taxon>Eukaryota</taxon>
        <taxon>Viridiplantae</taxon>
        <taxon>Streptophyta</taxon>
        <taxon>Embryophyta</taxon>
        <taxon>Tracheophyta</taxon>
        <taxon>Spermatophyta</taxon>
        <taxon>Magnoliopsida</taxon>
        <taxon>Liliopsida</taxon>
        <taxon>Poales</taxon>
        <taxon>Poaceae</taxon>
        <taxon>BOP clade</taxon>
        <taxon>Pooideae</taxon>
        <taxon>Triticodae</taxon>
        <taxon>Triticeae</taxon>
        <taxon>Triticinae</taxon>
        <taxon>Triticum</taxon>
    </lineage>
</organism>
<reference key="1">
    <citation type="online journal article" date="1996" name="Plant Gene Register">
        <title>Nucleotide sequence of one of two tandem genes encoding phenylalanine ammonia-lyase in Triticum aestivum.</title>
        <authorList>
            <person name="Liao Y.-C."/>
            <person name="Li H.-P."/>
            <person name="Kreuzaler F."/>
            <person name="Fischer R."/>
        </authorList>
        <locator>PGR96-102</locator>
    </citation>
    <scope>NUCLEOTIDE SEQUENCE [GENOMIC DNA]</scope>
    <source>
        <strain>cv. Chinese Spring</strain>
    </source>
</reference>
<proteinExistence type="inferred from homology"/>
<keyword id="KW-0963">Cytoplasm</keyword>
<keyword id="KW-0456">Lyase</keyword>
<keyword id="KW-0585">Phenylalanine catabolism</keyword>
<keyword id="KW-0587">Phenylpropanoid metabolism</keyword>
<keyword id="KW-1185">Reference proteome</keyword>
<dbReference type="EC" id="4.3.1.24" evidence="2"/>
<dbReference type="EMBL" id="X99705">
    <property type="protein sequence ID" value="CAA68036.1"/>
    <property type="molecule type" value="Genomic_DNA"/>
</dbReference>
<dbReference type="PIR" id="T06545">
    <property type="entry name" value="T06545"/>
</dbReference>
<dbReference type="SMR" id="Q43210"/>
<dbReference type="STRING" id="4565.Q43210"/>
<dbReference type="PaxDb" id="4565-Traes_2AL_9EC3226F7.1"/>
<dbReference type="eggNOG" id="KOG0222">
    <property type="taxonomic scope" value="Eukaryota"/>
</dbReference>
<dbReference type="BRENDA" id="4.3.1.24">
    <property type="organism ID" value="6500"/>
</dbReference>
<dbReference type="UniPathway" id="UPA00713">
    <property type="reaction ID" value="UER00725"/>
</dbReference>
<dbReference type="Proteomes" id="UP000019116">
    <property type="component" value="Unplaced"/>
</dbReference>
<dbReference type="ExpressionAtlas" id="Q43210">
    <property type="expression patterns" value="baseline and differential"/>
</dbReference>
<dbReference type="GO" id="GO:0005737">
    <property type="term" value="C:cytoplasm"/>
    <property type="evidence" value="ECO:0007669"/>
    <property type="project" value="UniProtKB-SubCell"/>
</dbReference>
<dbReference type="GO" id="GO:0016841">
    <property type="term" value="F:ammonia-lyase activity"/>
    <property type="evidence" value="ECO:0000318"/>
    <property type="project" value="GO_Central"/>
</dbReference>
<dbReference type="GO" id="GO:0045548">
    <property type="term" value="F:phenylalanine ammonia-lyase activity"/>
    <property type="evidence" value="ECO:0007669"/>
    <property type="project" value="UniProtKB-EC"/>
</dbReference>
<dbReference type="GO" id="GO:0009800">
    <property type="term" value="P:cinnamic acid biosynthetic process"/>
    <property type="evidence" value="ECO:0007669"/>
    <property type="project" value="UniProtKB-UniPathway"/>
</dbReference>
<dbReference type="GO" id="GO:0006559">
    <property type="term" value="P:L-phenylalanine catabolic process"/>
    <property type="evidence" value="ECO:0007669"/>
    <property type="project" value="UniProtKB-KW"/>
</dbReference>
<dbReference type="CDD" id="cd00332">
    <property type="entry name" value="PAL-HAL"/>
    <property type="match status" value="1"/>
</dbReference>
<dbReference type="FunFam" id="1.10.274.20:FF:000001">
    <property type="entry name" value="Phenylalanine ammonia-lyase"/>
    <property type="match status" value="1"/>
</dbReference>
<dbReference type="FunFam" id="1.10.275.10:FF:000009">
    <property type="entry name" value="Phenylalanine ammonia-lyase"/>
    <property type="match status" value="1"/>
</dbReference>
<dbReference type="FunFam" id="1.20.200.10:FF:000009">
    <property type="entry name" value="Phenylalanine ammonia-lyase"/>
    <property type="match status" value="1"/>
</dbReference>
<dbReference type="Gene3D" id="1.20.200.10">
    <property type="entry name" value="Fumarase/aspartase (Central domain)"/>
    <property type="match status" value="1"/>
</dbReference>
<dbReference type="Gene3D" id="1.10.275.10">
    <property type="entry name" value="Fumarase/aspartase (N-terminal domain)"/>
    <property type="match status" value="1"/>
</dbReference>
<dbReference type="Gene3D" id="1.10.274.20">
    <property type="entry name" value="Phenylalanine ammonia-lyase 1, domain 3"/>
    <property type="match status" value="1"/>
</dbReference>
<dbReference type="InterPro" id="IPR001106">
    <property type="entry name" value="Aromatic_Lyase"/>
</dbReference>
<dbReference type="InterPro" id="IPR024083">
    <property type="entry name" value="Fumarase/histidase_N"/>
</dbReference>
<dbReference type="InterPro" id="IPR008948">
    <property type="entry name" value="L-Aspartase-like"/>
</dbReference>
<dbReference type="InterPro" id="IPR022313">
    <property type="entry name" value="Phe/His_NH3-lyase_AS"/>
</dbReference>
<dbReference type="InterPro" id="IPR005922">
    <property type="entry name" value="Phe_NH3-lyase"/>
</dbReference>
<dbReference type="InterPro" id="IPR023144">
    <property type="entry name" value="Phe_NH3-lyase_shielding_dom_sf"/>
</dbReference>
<dbReference type="NCBIfam" id="TIGR01226">
    <property type="entry name" value="phe_am_lyase"/>
    <property type="match status" value="1"/>
</dbReference>
<dbReference type="PANTHER" id="PTHR10362">
    <property type="entry name" value="HISTIDINE AMMONIA-LYASE"/>
    <property type="match status" value="1"/>
</dbReference>
<dbReference type="Pfam" id="PF00221">
    <property type="entry name" value="Lyase_aromatic"/>
    <property type="match status" value="1"/>
</dbReference>
<dbReference type="SUPFAM" id="SSF48557">
    <property type="entry name" value="L-aspartase-like"/>
    <property type="match status" value="1"/>
</dbReference>
<dbReference type="PROSITE" id="PS00488">
    <property type="entry name" value="PAL_HISTIDASE"/>
    <property type="match status" value="1"/>
</dbReference>
<sequence length="700" mass="75938">MACAWRSRSRADPLNWGKAAEELSGSHLEAVKRMVEEYRKPVVTMEGATTIAMVAAVAAGSDTRVELDESARGRVKESSDWVMNSMMNGTDSYGVTTGFGATSHRRTKEGGALQRELIRFLNAGAFGTGTDGHVLPAAATRAAMLVRVNTLLQGYSGIRFEILETIATLLNANVTPCLPLRGTITASGDLVPLSYIAGLVTGRPNSMATAPDGSKVNAAEAFKIAGIQHGFFELQPKEGLAMVNGTAVGSGLASMVLFEANVLSLLAEVLSGVFCEVMNGKPEFTDHLTHKLKHHPGQIEAAAIMEHILEGSSYMMLAKKLGELDPLMKPKQDRYALRTSPQWLGPQIEVIRAATKSIEREINSVNDNPLIDVSRGKAIHGGNFQGTPIGVSMDNTRLAIAAIGKLMFAQFSELVNDFYNNGLPSNLSGGRNPSLDYGFKGAEIAMASYCSELQFLGNPVTNHVQSAEQHNQDVNSLGLISSRKTAEAIDILKLMSSTFLVALCQAIDLRHLEENVKNAVKSCVKTVARKTLSTDNNGHLHNARFCEKDLLLTIDREAVFAYADDPCSANYPLMQKMRAVLVEHALANGEAEAHVETSVFAKLAMFEQELRAVLPKEVEAARSAVENGTAAQQNRIAECRSYPLYRFVRKELGTEYLTGEKTRSPGEEVDKVFVAMNQGKHIDALLECLKEWNGEPLPLC</sequence>
<evidence type="ECO:0000250" key="1">
    <source>
        <dbReference type="UniProtKB" id="P11544"/>
    </source>
</evidence>
<evidence type="ECO:0000250" key="2">
    <source>
        <dbReference type="UniProtKB" id="P24481"/>
    </source>
</evidence>
<evidence type="ECO:0000250" key="3">
    <source>
        <dbReference type="UniProtKB" id="Q68G84"/>
    </source>
</evidence>
<evidence type="ECO:0000255" key="4">
    <source>
        <dbReference type="PROSITE-ProRule" id="PRU10122"/>
    </source>
</evidence>
<evidence type="ECO:0000305" key="5"/>
<comment type="function">
    <text evidence="2">This is a key enzyme of plant metabolism catalyzing the first reaction in the biosynthesis from L-phenylalanine of a wide variety of natural products based on the phenylpropane skeleton.</text>
</comment>
<comment type="catalytic activity">
    <reaction evidence="2">
        <text>L-phenylalanine = (E)-cinnamate + NH4(+)</text>
        <dbReference type="Rhea" id="RHEA:21384"/>
        <dbReference type="ChEBI" id="CHEBI:15669"/>
        <dbReference type="ChEBI" id="CHEBI:28938"/>
        <dbReference type="ChEBI" id="CHEBI:58095"/>
        <dbReference type="EC" id="4.3.1.24"/>
    </reaction>
</comment>
<comment type="pathway">
    <text evidence="5">Phenylpropanoid metabolism; trans-cinnamate biosynthesis; trans-cinnamate from L-phenylalanine: step 1/1.</text>
</comment>
<comment type="subunit">
    <text evidence="2">Homotetramer.</text>
</comment>
<comment type="subcellular location">
    <subcellularLocation>
        <location evidence="5">Cytoplasm</location>
    </subcellularLocation>
</comment>
<comment type="PTM">
    <text evidence="3">Contains an active site 4-methylidene-imidazol-5-one (MIO), which is formed autocatalytically by cyclization and dehydration of residues Ala-Ser-Gly.</text>
</comment>
<comment type="similarity">
    <text evidence="5">Belongs to the PAL/histidase family.</text>
</comment>
<feature type="chain" id="PRO_0000215428" description="Phenylalanine ammonia-lyase">
    <location>
        <begin position="1"/>
        <end position="700"/>
    </location>
</feature>
<feature type="active site" description="Proton donor/acceptor" evidence="3">
    <location>
        <position position="93"/>
    </location>
</feature>
<feature type="binding site" evidence="3">
    <location>
        <position position="244"/>
    </location>
    <ligand>
        <name>(E)-cinnamate</name>
        <dbReference type="ChEBI" id="CHEBI:15669"/>
    </ligand>
</feature>
<feature type="binding site" evidence="3">
    <location>
        <position position="332"/>
    </location>
    <ligand>
        <name>(E)-cinnamate</name>
        <dbReference type="ChEBI" id="CHEBI:15669"/>
    </ligand>
</feature>
<feature type="binding site" evidence="3">
    <location>
        <position position="338"/>
    </location>
    <ligand>
        <name>(E)-cinnamate</name>
        <dbReference type="ChEBI" id="CHEBI:15669"/>
    </ligand>
</feature>
<feature type="binding site" evidence="3">
    <location>
        <position position="368"/>
    </location>
    <ligand>
        <name>(E)-cinnamate</name>
        <dbReference type="ChEBI" id="CHEBI:15669"/>
    </ligand>
</feature>
<feature type="binding site" evidence="1">
    <location>
        <position position="440"/>
    </location>
    <ligand>
        <name>(E)-cinnamate</name>
        <dbReference type="ChEBI" id="CHEBI:15669"/>
    </ligand>
</feature>
<feature type="binding site" evidence="1">
    <location>
        <position position="468"/>
    </location>
    <ligand>
        <name>(E)-cinnamate</name>
        <dbReference type="ChEBI" id="CHEBI:15669"/>
    </ligand>
</feature>
<feature type="binding site" evidence="3">
    <location>
        <position position="471"/>
    </location>
    <ligand>
        <name>(E)-cinnamate</name>
        <dbReference type="ChEBI" id="CHEBI:15669"/>
    </ligand>
</feature>
<feature type="modified residue" description="2,3-didehydroalanine (Ser)" evidence="4">
    <location>
        <position position="187"/>
    </location>
</feature>
<feature type="cross-link" description="5-imidazolinone (Ala-Gly)" evidence="3">
    <location>
        <begin position="186"/>
        <end position="188"/>
    </location>
</feature>
<accession>Q43210</accession>